<gene>
    <name type="ordered locus">NGR_a03120</name>
    <name type="ORF">y4jD</name>
</gene>
<organism>
    <name type="scientific">Sinorhizobium fredii (strain NBRC 101917 / NGR234)</name>
    <dbReference type="NCBI Taxonomy" id="394"/>
    <lineage>
        <taxon>Bacteria</taxon>
        <taxon>Pseudomonadati</taxon>
        <taxon>Pseudomonadota</taxon>
        <taxon>Alphaproteobacteria</taxon>
        <taxon>Hyphomicrobiales</taxon>
        <taxon>Rhizobiaceae</taxon>
        <taxon>Sinorhizobium/Ensifer group</taxon>
        <taxon>Sinorhizobium</taxon>
    </lineage>
</organism>
<reference key="1">
    <citation type="journal article" date="1997" name="Nature">
        <title>Molecular basis of symbiosis between Rhizobium and legumes.</title>
        <authorList>
            <person name="Freiberg C.A."/>
            <person name="Fellay R."/>
            <person name="Bairoch A."/>
            <person name="Broughton W.J."/>
            <person name="Rosenthal A."/>
            <person name="Perret X."/>
        </authorList>
    </citation>
    <scope>NUCLEOTIDE SEQUENCE [LARGE SCALE GENOMIC DNA]</scope>
    <source>
        <strain>NBRC 101917 / NGR234</strain>
    </source>
</reference>
<reference key="2">
    <citation type="journal article" date="2009" name="Appl. Environ. Microbiol.">
        <title>Rhizobium sp. strain NGR234 possesses a remarkable number of secretion systems.</title>
        <authorList>
            <person name="Schmeisser C."/>
            <person name="Liesegang H."/>
            <person name="Krysciak D."/>
            <person name="Bakkou N."/>
            <person name="Le Quere A."/>
            <person name="Wollherr A."/>
            <person name="Heinemeyer I."/>
            <person name="Morgenstern B."/>
            <person name="Pommerening-Roeser A."/>
            <person name="Flores M."/>
            <person name="Palacios R."/>
            <person name="Brenner S."/>
            <person name="Gottschalk G."/>
            <person name="Schmitz R.A."/>
            <person name="Broughton W.J."/>
            <person name="Perret X."/>
            <person name="Strittmatter A.W."/>
            <person name="Streit W.R."/>
        </authorList>
    </citation>
    <scope>NUCLEOTIDE SEQUENCE [LARGE SCALE GENOMIC DNA]</scope>
    <source>
        <strain>NBRC 101917 / NGR234</strain>
    </source>
</reference>
<feature type="chain" id="PRO_0000200870" description="Uncharacterized protein y4jD">
    <location>
        <begin position="1"/>
        <end position="511"/>
    </location>
</feature>
<feature type="region of interest" description="Disordered" evidence="1">
    <location>
        <begin position="59"/>
        <end position="79"/>
    </location>
</feature>
<proteinExistence type="inferred from homology"/>
<accession>P55504</accession>
<sequence length="511" mass="56702">MSLRHEQLPQDVEQLSRMVLDLRAEVAYLKRLIHGARSEVLSTIDPTQTSLDLGDLSTVPVAANDDQPDGSRQSVRGRQSAARNIGFLPKHLPRYDVIIEPESRACACCSGALHRIGETTSEALDIVPAILRVKRTIRPRYACRACENGVMQAPAPARFMDGGMATTALAAHIVVSKFAWHLPLYRQAQIFAGYGITLDRGTLGIWGTRVAWWLKPLYDRLLAFIRSQPRVFSDETRLPRLDPGRKRTKVCQLWAQAVDDRPWKGPAPPAVGYIFSESRSAREAERQLASFNGVLQVDGYTAYKTLARHRGKSNSSPLRLAFCLAHARRKFVDVVKLTGSPEALEIVSILAEVYQIEREIRGQSAEDRQNARQLRSAPVMRQLKARLLDLKNDISTQSALAKAIKYTLAHWTGLNAFLDDGTIEVDSNIVERSMKSVALTRKNSMFVGNVQGGETFAVLASLINSAKLSGLDPYAWLADVLERIVSGSTTINQLETLLPWNWKADQVGQAA</sequence>
<protein>
    <recommendedName>
        <fullName>Uncharacterized protein y4jD</fullName>
    </recommendedName>
</protein>
<evidence type="ECO:0000256" key="1">
    <source>
        <dbReference type="SAM" id="MobiDB-lite"/>
    </source>
</evidence>
<evidence type="ECO:0000305" key="2"/>
<keyword id="KW-0614">Plasmid</keyword>
<keyword id="KW-1185">Reference proteome</keyword>
<comment type="similarity">
    <text evidence="2">Belongs to the transposase 25 family.</text>
</comment>
<dbReference type="EMBL" id="U00090">
    <property type="protein sequence ID" value="AAB91716.1"/>
    <property type="molecule type" value="Genomic_DNA"/>
</dbReference>
<dbReference type="RefSeq" id="NP_443914.1">
    <property type="nucleotide sequence ID" value="NC_000914.2"/>
</dbReference>
<dbReference type="RefSeq" id="WP_010875332.1">
    <property type="nucleotide sequence ID" value="NC_000914.2"/>
</dbReference>
<dbReference type="SMR" id="P55504"/>
<dbReference type="KEGG" id="rhi:NGR_a03120"/>
<dbReference type="PATRIC" id="fig|394.7.peg.320"/>
<dbReference type="eggNOG" id="COG2433">
    <property type="taxonomic scope" value="Bacteria"/>
</dbReference>
<dbReference type="HOGENOM" id="CLU_023034_0_1_5"/>
<dbReference type="OrthoDB" id="9800877at2"/>
<dbReference type="Proteomes" id="UP000001054">
    <property type="component" value="Plasmid pNGR234a"/>
</dbReference>
<dbReference type="InterPro" id="IPR039552">
    <property type="entry name" value="IS66_C"/>
</dbReference>
<dbReference type="InterPro" id="IPR027417">
    <property type="entry name" value="P-loop_NTPase"/>
</dbReference>
<dbReference type="InterPro" id="IPR052344">
    <property type="entry name" value="Transposase-related"/>
</dbReference>
<dbReference type="InterPro" id="IPR004291">
    <property type="entry name" value="Transposase_IS66_central"/>
</dbReference>
<dbReference type="InterPro" id="IPR024463">
    <property type="entry name" value="Transposase_TnpC_homeodom"/>
</dbReference>
<dbReference type="InterPro" id="IPR024474">
    <property type="entry name" value="Znf_dom_IS66"/>
</dbReference>
<dbReference type="NCBIfam" id="NF033517">
    <property type="entry name" value="transpos_IS66"/>
    <property type="match status" value="1"/>
</dbReference>
<dbReference type="PANTHER" id="PTHR33678">
    <property type="entry name" value="BLL1576 PROTEIN"/>
    <property type="match status" value="1"/>
</dbReference>
<dbReference type="PANTHER" id="PTHR33678:SF1">
    <property type="entry name" value="BLL1576 PROTEIN"/>
    <property type="match status" value="1"/>
</dbReference>
<dbReference type="Pfam" id="PF03050">
    <property type="entry name" value="DDE_Tnp_IS66"/>
    <property type="match status" value="1"/>
</dbReference>
<dbReference type="Pfam" id="PF13817">
    <property type="entry name" value="DDE_Tnp_IS66_C"/>
    <property type="match status" value="1"/>
</dbReference>
<dbReference type="Pfam" id="PF13007">
    <property type="entry name" value="LZ_Tnp_IS66"/>
    <property type="match status" value="1"/>
</dbReference>
<dbReference type="Pfam" id="PF13005">
    <property type="entry name" value="zf-IS66"/>
    <property type="match status" value="1"/>
</dbReference>
<dbReference type="SUPFAM" id="SSF52540">
    <property type="entry name" value="P-loop containing nucleoside triphosphate hydrolases"/>
    <property type="match status" value="1"/>
</dbReference>
<name>Y4JD_SINFN</name>
<geneLocation type="plasmid">
    <name>sym pNGR234a</name>
</geneLocation>